<name>SYP_FLAJ1</name>
<dbReference type="EC" id="6.1.1.15" evidence="1"/>
<dbReference type="EMBL" id="CP000685">
    <property type="protein sequence ID" value="ABQ07938.1"/>
    <property type="molecule type" value="Genomic_DNA"/>
</dbReference>
<dbReference type="RefSeq" id="WP_012026904.1">
    <property type="nucleotide sequence ID" value="NC_009441.1"/>
</dbReference>
<dbReference type="SMR" id="A5FA31"/>
<dbReference type="STRING" id="376686.Fjoh_4939"/>
<dbReference type="KEGG" id="fjo:Fjoh_4939"/>
<dbReference type="eggNOG" id="COG0442">
    <property type="taxonomic scope" value="Bacteria"/>
</dbReference>
<dbReference type="HOGENOM" id="CLU_001882_4_2_10"/>
<dbReference type="OrthoDB" id="9809052at2"/>
<dbReference type="Proteomes" id="UP000006694">
    <property type="component" value="Chromosome"/>
</dbReference>
<dbReference type="GO" id="GO:0017101">
    <property type="term" value="C:aminoacyl-tRNA synthetase multienzyme complex"/>
    <property type="evidence" value="ECO:0007669"/>
    <property type="project" value="TreeGrafter"/>
</dbReference>
<dbReference type="GO" id="GO:0005737">
    <property type="term" value="C:cytoplasm"/>
    <property type="evidence" value="ECO:0007669"/>
    <property type="project" value="UniProtKB-SubCell"/>
</dbReference>
<dbReference type="GO" id="GO:0005524">
    <property type="term" value="F:ATP binding"/>
    <property type="evidence" value="ECO:0007669"/>
    <property type="project" value="UniProtKB-UniRule"/>
</dbReference>
<dbReference type="GO" id="GO:0004827">
    <property type="term" value="F:proline-tRNA ligase activity"/>
    <property type="evidence" value="ECO:0007669"/>
    <property type="project" value="UniProtKB-UniRule"/>
</dbReference>
<dbReference type="GO" id="GO:0006433">
    <property type="term" value="P:prolyl-tRNA aminoacylation"/>
    <property type="evidence" value="ECO:0007669"/>
    <property type="project" value="UniProtKB-UniRule"/>
</dbReference>
<dbReference type="CDD" id="cd00862">
    <property type="entry name" value="ProRS_anticodon_zinc"/>
    <property type="match status" value="1"/>
</dbReference>
<dbReference type="CDD" id="cd00778">
    <property type="entry name" value="ProRS_core_arch_euk"/>
    <property type="match status" value="1"/>
</dbReference>
<dbReference type="FunFam" id="3.40.50.800:FF:000005">
    <property type="entry name" value="bifunctional glutamate/proline--tRNA ligase"/>
    <property type="match status" value="1"/>
</dbReference>
<dbReference type="FunFam" id="3.30.930.10:FF:000023">
    <property type="entry name" value="Proline--tRNA ligase"/>
    <property type="match status" value="1"/>
</dbReference>
<dbReference type="Gene3D" id="3.40.50.800">
    <property type="entry name" value="Anticodon-binding domain"/>
    <property type="match status" value="1"/>
</dbReference>
<dbReference type="Gene3D" id="3.30.930.10">
    <property type="entry name" value="Bira Bifunctional Protein, Domain 2"/>
    <property type="match status" value="1"/>
</dbReference>
<dbReference type="Gene3D" id="3.30.110.30">
    <property type="entry name" value="C-terminal domain of ProRS"/>
    <property type="match status" value="1"/>
</dbReference>
<dbReference type="HAMAP" id="MF_01571">
    <property type="entry name" value="Pro_tRNA_synth_type3"/>
    <property type="match status" value="1"/>
</dbReference>
<dbReference type="InterPro" id="IPR002314">
    <property type="entry name" value="aa-tRNA-synt_IIb"/>
</dbReference>
<dbReference type="InterPro" id="IPR006195">
    <property type="entry name" value="aa-tRNA-synth_II"/>
</dbReference>
<dbReference type="InterPro" id="IPR045864">
    <property type="entry name" value="aa-tRNA-synth_II/BPL/LPL"/>
</dbReference>
<dbReference type="InterPro" id="IPR004154">
    <property type="entry name" value="Anticodon-bd"/>
</dbReference>
<dbReference type="InterPro" id="IPR036621">
    <property type="entry name" value="Anticodon-bd_dom_sf"/>
</dbReference>
<dbReference type="InterPro" id="IPR004499">
    <property type="entry name" value="Pro-tRNA-ligase_IIa_arc-type"/>
</dbReference>
<dbReference type="InterPro" id="IPR016061">
    <property type="entry name" value="Pro-tRNA_ligase_II_C"/>
</dbReference>
<dbReference type="InterPro" id="IPR017449">
    <property type="entry name" value="Pro-tRNA_synth_II"/>
</dbReference>
<dbReference type="InterPro" id="IPR033721">
    <property type="entry name" value="ProRS_core_arch_euk"/>
</dbReference>
<dbReference type="NCBIfam" id="TIGR00408">
    <property type="entry name" value="proS_fam_I"/>
    <property type="match status" value="1"/>
</dbReference>
<dbReference type="PANTHER" id="PTHR43382:SF2">
    <property type="entry name" value="BIFUNCTIONAL GLUTAMATE_PROLINE--TRNA LIGASE"/>
    <property type="match status" value="1"/>
</dbReference>
<dbReference type="PANTHER" id="PTHR43382">
    <property type="entry name" value="PROLYL-TRNA SYNTHETASE"/>
    <property type="match status" value="1"/>
</dbReference>
<dbReference type="Pfam" id="PF03129">
    <property type="entry name" value="HGTP_anticodon"/>
    <property type="match status" value="1"/>
</dbReference>
<dbReference type="Pfam" id="PF09180">
    <property type="entry name" value="ProRS-C_1"/>
    <property type="match status" value="1"/>
</dbReference>
<dbReference type="Pfam" id="PF00587">
    <property type="entry name" value="tRNA-synt_2b"/>
    <property type="match status" value="1"/>
</dbReference>
<dbReference type="SMART" id="SM00946">
    <property type="entry name" value="ProRS-C_1"/>
    <property type="match status" value="1"/>
</dbReference>
<dbReference type="SUPFAM" id="SSF64586">
    <property type="entry name" value="C-terminal domain of ProRS"/>
    <property type="match status" value="1"/>
</dbReference>
<dbReference type="SUPFAM" id="SSF52954">
    <property type="entry name" value="Class II aaRS ABD-related"/>
    <property type="match status" value="1"/>
</dbReference>
<dbReference type="SUPFAM" id="SSF55681">
    <property type="entry name" value="Class II aaRS and biotin synthetases"/>
    <property type="match status" value="1"/>
</dbReference>
<dbReference type="PROSITE" id="PS50862">
    <property type="entry name" value="AA_TRNA_LIGASE_II"/>
    <property type="match status" value="1"/>
</dbReference>
<organism>
    <name type="scientific">Flavobacterium johnsoniae (strain ATCC 17061 / DSM 2064 / JCM 8514 / BCRC 14874 / CCUG 350202 / NBRC 14942 / NCIMB 11054 / UW101)</name>
    <name type="common">Cytophaga johnsonae</name>
    <dbReference type="NCBI Taxonomy" id="376686"/>
    <lineage>
        <taxon>Bacteria</taxon>
        <taxon>Pseudomonadati</taxon>
        <taxon>Bacteroidota</taxon>
        <taxon>Flavobacteriia</taxon>
        <taxon>Flavobacteriales</taxon>
        <taxon>Flavobacteriaceae</taxon>
        <taxon>Flavobacterium</taxon>
    </lineage>
</organism>
<comment type="function">
    <text evidence="1">Catalyzes the attachment of proline to tRNA(Pro) in a two-step reaction: proline is first activated by ATP to form Pro-AMP and then transferred to the acceptor end of tRNA(Pro).</text>
</comment>
<comment type="catalytic activity">
    <reaction evidence="1">
        <text>tRNA(Pro) + L-proline + ATP = L-prolyl-tRNA(Pro) + AMP + diphosphate</text>
        <dbReference type="Rhea" id="RHEA:14305"/>
        <dbReference type="Rhea" id="RHEA-COMP:9700"/>
        <dbReference type="Rhea" id="RHEA-COMP:9702"/>
        <dbReference type="ChEBI" id="CHEBI:30616"/>
        <dbReference type="ChEBI" id="CHEBI:33019"/>
        <dbReference type="ChEBI" id="CHEBI:60039"/>
        <dbReference type="ChEBI" id="CHEBI:78442"/>
        <dbReference type="ChEBI" id="CHEBI:78532"/>
        <dbReference type="ChEBI" id="CHEBI:456215"/>
        <dbReference type="EC" id="6.1.1.15"/>
    </reaction>
</comment>
<comment type="subunit">
    <text evidence="1">Homodimer.</text>
</comment>
<comment type="subcellular location">
    <subcellularLocation>
        <location evidence="1">Cytoplasm</location>
    </subcellularLocation>
</comment>
<comment type="domain">
    <text evidence="1">Consists of three domains: the N-terminal catalytic domain, the anticodon-binding domain and the C-terminal extension.</text>
</comment>
<comment type="similarity">
    <text evidence="1">Belongs to the class-II aminoacyl-tRNA synthetase family. ProS type 3 subfamily.</text>
</comment>
<reference key="1">
    <citation type="journal article" date="2009" name="Appl. Environ. Microbiol.">
        <title>Novel features of the polysaccharide-digesting gliding bacterium Flavobacterium johnsoniae as revealed by genome sequence analysis.</title>
        <authorList>
            <person name="McBride M.J."/>
            <person name="Xie G."/>
            <person name="Martens E.C."/>
            <person name="Lapidus A."/>
            <person name="Henrissat B."/>
            <person name="Rhodes R.G."/>
            <person name="Goltsman E."/>
            <person name="Wang W."/>
            <person name="Xu J."/>
            <person name="Hunnicutt D.W."/>
            <person name="Staroscik A.M."/>
            <person name="Hoover T.R."/>
            <person name="Cheng Y.Q."/>
            <person name="Stein J.L."/>
        </authorList>
    </citation>
    <scope>NUCLEOTIDE SEQUENCE [LARGE SCALE GENOMIC DNA]</scope>
    <source>
        <strain>ATCC 17061 / DSM 2064 / JCM 8514 / BCRC 14874 / CCUG 350202 / NBRC 14942 / NCIMB 11054 / UW101</strain>
    </source>
</reference>
<proteinExistence type="inferred from homology"/>
<protein>
    <recommendedName>
        <fullName evidence="1">Proline--tRNA ligase</fullName>
        <ecNumber evidence="1">6.1.1.15</ecNumber>
    </recommendedName>
    <alternativeName>
        <fullName evidence="1">Prolyl-tRNA synthetase</fullName>
        <shortName evidence="1">ProRS</shortName>
    </alternativeName>
</protein>
<accession>A5FA31</accession>
<evidence type="ECO:0000255" key="1">
    <source>
        <dbReference type="HAMAP-Rule" id="MF_01571"/>
    </source>
</evidence>
<keyword id="KW-0030">Aminoacyl-tRNA synthetase</keyword>
<keyword id="KW-0067">ATP-binding</keyword>
<keyword id="KW-0963">Cytoplasm</keyword>
<keyword id="KW-0436">Ligase</keyword>
<keyword id="KW-0547">Nucleotide-binding</keyword>
<keyword id="KW-0648">Protein biosynthesis</keyword>
<feature type="chain" id="PRO_1000215563" description="Proline--tRNA ligase">
    <location>
        <begin position="1"/>
        <end position="492"/>
    </location>
</feature>
<sequence>MSKNLTTRSEDYSKWYNELVVKADLAENSGVRGCMVIKPYGYAIWEKMQAELDRMFKETGHQNAYFPLFVPKSMFEAEEKNAEGFAKECAVVTHYRLKNDEDRPGKLMVDPNAKLEEELIVRPTSEAIIWSTYKGWVQSYRDLPLLINQWANVVRWEMRTRLFLRTAEFLWQEGHTAHATKDEAIEESEKMMNVYADFAENFMAIPVVKGFKTETERFAGADETYCIEALMQDGKALQAGTSHFLGQNFAKAFDVKFANAEGKQEHVWGTSWGVSTRLMGALIMTHSDDQGLVLPPNLAPIQVVIVPIHKTDEQLAQITAAVNELTAKLRKLKISVKYDDRTTQKPGFKFAEWELKGVPVRIAVGPKDLENGTFEVARRDNLSKEVVAAEKIVDHVNDLLEQIQKDLFDKALTYRNTHITEVNNFEEFKEVLEGKGGFISAHWDGTAATEEKIKDLTKATIRCIPLDAVEEAGTCVFTGEPSSKRVLFAKAY</sequence>
<gene>
    <name evidence="1" type="primary">proS</name>
    <name type="ordered locus">Fjoh_4939</name>
</gene>